<organism>
    <name type="scientific">Escherichia coli O6:H1 (strain CFT073 / ATCC 700928 / UPEC)</name>
    <dbReference type="NCBI Taxonomy" id="199310"/>
    <lineage>
        <taxon>Bacteria</taxon>
        <taxon>Pseudomonadati</taxon>
        <taxon>Pseudomonadota</taxon>
        <taxon>Gammaproteobacteria</taxon>
        <taxon>Enterobacterales</taxon>
        <taxon>Enterobacteriaceae</taxon>
        <taxon>Escherichia</taxon>
    </lineage>
</organism>
<name>TSAC_ECOL6</name>
<keyword id="KW-0067">ATP-binding</keyword>
<keyword id="KW-0963">Cytoplasm</keyword>
<keyword id="KW-0547">Nucleotide-binding</keyword>
<keyword id="KW-0548">Nucleotidyltransferase</keyword>
<keyword id="KW-1185">Reference proteome</keyword>
<keyword id="KW-0808">Transferase</keyword>
<keyword id="KW-0819">tRNA processing</keyword>
<proteinExistence type="inferred from homology"/>
<accession>Q8FD17</accession>
<comment type="function">
    <text evidence="1">Required for the formation of a threonylcarbamoyl group on adenosine at position 37 (t(6)A37) in tRNAs that read codons beginning with adenine. Catalyzes the conversion of L-threonine, HCO(3)(-)/CO(2) and ATP to give threonylcarbamoyl-AMP (TC-AMP) as the acyladenylate intermediate, with the release of diphosphate.</text>
</comment>
<comment type="catalytic activity">
    <reaction evidence="1">
        <text>L-threonine + hydrogencarbonate + ATP = L-threonylcarbamoyladenylate + diphosphate + H2O</text>
        <dbReference type="Rhea" id="RHEA:36407"/>
        <dbReference type="ChEBI" id="CHEBI:15377"/>
        <dbReference type="ChEBI" id="CHEBI:17544"/>
        <dbReference type="ChEBI" id="CHEBI:30616"/>
        <dbReference type="ChEBI" id="CHEBI:33019"/>
        <dbReference type="ChEBI" id="CHEBI:57926"/>
        <dbReference type="ChEBI" id="CHEBI:73682"/>
        <dbReference type="EC" id="2.7.7.87"/>
    </reaction>
</comment>
<comment type="subcellular location">
    <subcellularLocation>
        <location evidence="1">Cytoplasm</location>
    </subcellularLocation>
</comment>
<comment type="similarity">
    <text evidence="1">Belongs to the SUA5 family. TsaC subfamily.</text>
</comment>
<comment type="sequence caution" evidence="2">
    <conflict type="erroneous initiation">
        <sequence resource="EMBL-CDS" id="AAN82481"/>
    </conflict>
</comment>
<dbReference type="EC" id="2.7.7.87" evidence="1"/>
<dbReference type="EMBL" id="AE014075">
    <property type="protein sequence ID" value="AAN82481.1"/>
    <property type="status" value="ALT_INIT"/>
    <property type="molecule type" value="Genomic_DNA"/>
</dbReference>
<dbReference type="RefSeq" id="WP_001296460.1">
    <property type="nucleotide sequence ID" value="NZ_CP051263.1"/>
</dbReference>
<dbReference type="SMR" id="Q8FD17"/>
<dbReference type="STRING" id="199310.c4043"/>
<dbReference type="KEGG" id="ecc:c4043"/>
<dbReference type="eggNOG" id="COG0009">
    <property type="taxonomic scope" value="Bacteria"/>
</dbReference>
<dbReference type="HOGENOM" id="CLU_031397_6_0_6"/>
<dbReference type="Proteomes" id="UP000001410">
    <property type="component" value="Chromosome"/>
</dbReference>
<dbReference type="GO" id="GO:0005737">
    <property type="term" value="C:cytoplasm"/>
    <property type="evidence" value="ECO:0007669"/>
    <property type="project" value="UniProtKB-SubCell"/>
</dbReference>
<dbReference type="GO" id="GO:0005524">
    <property type="term" value="F:ATP binding"/>
    <property type="evidence" value="ECO:0007669"/>
    <property type="project" value="UniProtKB-UniRule"/>
</dbReference>
<dbReference type="GO" id="GO:0003725">
    <property type="term" value="F:double-stranded RNA binding"/>
    <property type="evidence" value="ECO:0007669"/>
    <property type="project" value="InterPro"/>
</dbReference>
<dbReference type="GO" id="GO:0061710">
    <property type="term" value="F:L-threonylcarbamoyladenylate synthase"/>
    <property type="evidence" value="ECO:0007669"/>
    <property type="project" value="UniProtKB-EC"/>
</dbReference>
<dbReference type="GO" id="GO:0000049">
    <property type="term" value="F:tRNA binding"/>
    <property type="evidence" value="ECO:0007669"/>
    <property type="project" value="TreeGrafter"/>
</dbReference>
<dbReference type="GO" id="GO:0006450">
    <property type="term" value="P:regulation of translational fidelity"/>
    <property type="evidence" value="ECO:0007669"/>
    <property type="project" value="TreeGrafter"/>
</dbReference>
<dbReference type="GO" id="GO:0002949">
    <property type="term" value="P:tRNA threonylcarbamoyladenosine modification"/>
    <property type="evidence" value="ECO:0007669"/>
    <property type="project" value="UniProtKB-UniRule"/>
</dbReference>
<dbReference type="FunFam" id="3.90.870.10:FF:000004">
    <property type="entry name" value="Threonylcarbamoyl-AMP synthase"/>
    <property type="match status" value="1"/>
</dbReference>
<dbReference type="Gene3D" id="3.90.870.10">
    <property type="entry name" value="DHBP synthase"/>
    <property type="match status" value="1"/>
</dbReference>
<dbReference type="HAMAP" id="MF_01852">
    <property type="entry name" value="TsaC"/>
    <property type="match status" value="1"/>
</dbReference>
<dbReference type="InterPro" id="IPR017945">
    <property type="entry name" value="DHBP_synth_RibB-like_a/b_dom"/>
</dbReference>
<dbReference type="InterPro" id="IPR006070">
    <property type="entry name" value="Sua5-like_dom"/>
</dbReference>
<dbReference type="InterPro" id="IPR023535">
    <property type="entry name" value="TC-AMP_synthase"/>
</dbReference>
<dbReference type="InterPro" id="IPR050156">
    <property type="entry name" value="TC-AMP_synthase_SUA5"/>
</dbReference>
<dbReference type="NCBIfam" id="NF007919">
    <property type="entry name" value="PRK10634.1"/>
    <property type="match status" value="1"/>
</dbReference>
<dbReference type="PANTHER" id="PTHR17490">
    <property type="entry name" value="SUA5"/>
    <property type="match status" value="1"/>
</dbReference>
<dbReference type="PANTHER" id="PTHR17490:SF18">
    <property type="entry name" value="THREONYLCARBAMOYL-AMP SYNTHASE"/>
    <property type="match status" value="1"/>
</dbReference>
<dbReference type="Pfam" id="PF01300">
    <property type="entry name" value="Sua5_yciO_yrdC"/>
    <property type="match status" value="1"/>
</dbReference>
<dbReference type="SUPFAM" id="SSF55821">
    <property type="entry name" value="YrdC/RibB"/>
    <property type="match status" value="1"/>
</dbReference>
<dbReference type="PROSITE" id="PS51163">
    <property type="entry name" value="YRDC"/>
    <property type="match status" value="1"/>
</dbReference>
<feature type="chain" id="PRO_0000352919" description="Threonylcarbamoyl-AMP synthase">
    <location>
        <begin position="1"/>
        <end position="190"/>
    </location>
</feature>
<feature type="domain" description="YrdC-like" evidence="1">
    <location>
        <begin position="7"/>
        <end position="190"/>
    </location>
</feature>
<gene>
    <name evidence="1" type="primary">tsaC</name>
    <name type="synonym">rimN</name>
    <name type="ordered locus">c4043</name>
</gene>
<sequence>MNNNLQGDAIAAAIDVLNEERVIAYPTEAVFGVGCDPDSETAVMRLLELKRRPVDKGLILIAANYEQLKPYIDDTMLTDAQRETIFSRWPGPVTFVFPAPATTPRWLTGRFDSLAVRVTDHPLVVALCQAYGKPLVSTSANLSGLPPCRTVDEVRAQFGAAFPVVPGETGGRLNPSEIRDALTGELFRQG</sequence>
<protein>
    <recommendedName>
        <fullName evidence="1">Threonylcarbamoyl-AMP synthase</fullName>
        <shortName evidence="1">TC-AMP synthase</shortName>
        <ecNumber evidence="1">2.7.7.87</ecNumber>
    </recommendedName>
    <alternativeName>
        <fullName evidence="1">L-threonylcarbamoyladenylate synthase</fullName>
    </alternativeName>
    <alternativeName>
        <fullName evidence="1">t(6)A37 threonylcarbamoyladenosine biosynthesis protein TsaC</fullName>
    </alternativeName>
    <alternativeName>
        <fullName evidence="1">tRNA threonylcarbamoyladenosine biosynthesis protein TsaC</fullName>
    </alternativeName>
</protein>
<evidence type="ECO:0000255" key="1">
    <source>
        <dbReference type="HAMAP-Rule" id="MF_01852"/>
    </source>
</evidence>
<evidence type="ECO:0000305" key="2"/>
<reference key="1">
    <citation type="journal article" date="2002" name="Proc. Natl. Acad. Sci. U.S.A.">
        <title>Extensive mosaic structure revealed by the complete genome sequence of uropathogenic Escherichia coli.</title>
        <authorList>
            <person name="Welch R.A."/>
            <person name="Burland V."/>
            <person name="Plunkett G. III"/>
            <person name="Redford P."/>
            <person name="Roesch P."/>
            <person name="Rasko D."/>
            <person name="Buckles E.L."/>
            <person name="Liou S.-R."/>
            <person name="Boutin A."/>
            <person name="Hackett J."/>
            <person name="Stroud D."/>
            <person name="Mayhew G.F."/>
            <person name="Rose D.J."/>
            <person name="Zhou S."/>
            <person name="Schwartz D.C."/>
            <person name="Perna N.T."/>
            <person name="Mobley H.L.T."/>
            <person name="Donnenberg M.S."/>
            <person name="Blattner F.R."/>
        </authorList>
    </citation>
    <scope>NUCLEOTIDE SEQUENCE [LARGE SCALE GENOMIC DNA]</scope>
    <source>
        <strain>CFT073 / ATCC 700928 / UPEC</strain>
    </source>
</reference>